<proteinExistence type="inferred from homology"/>
<gene>
    <name evidence="1" type="primary">rpoC</name>
    <name type="ordered locus">Saro_0023</name>
</gene>
<feature type="chain" id="PRO_0000240812" description="DNA-directed RNA polymerase subunit beta'">
    <location>
        <begin position="1"/>
        <end position="1427"/>
    </location>
</feature>
<feature type="region of interest" description="Disordered" evidence="2">
    <location>
        <begin position="1044"/>
        <end position="1065"/>
    </location>
</feature>
<feature type="region of interest" description="Disordered" evidence="2">
    <location>
        <begin position="1394"/>
        <end position="1427"/>
    </location>
</feature>
<feature type="binding site" evidence="1">
    <location>
        <position position="70"/>
    </location>
    <ligand>
        <name>Zn(2+)</name>
        <dbReference type="ChEBI" id="CHEBI:29105"/>
        <label>1</label>
    </ligand>
</feature>
<feature type="binding site" evidence="1">
    <location>
        <position position="72"/>
    </location>
    <ligand>
        <name>Zn(2+)</name>
        <dbReference type="ChEBI" id="CHEBI:29105"/>
        <label>1</label>
    </ligand>
</feature>
<feature type="binding site" evidence="1">
    <location>
        <position position="85"/>
    </location>
    <ligand>
        <name>Zn(2+)</name>
        <dbReference type="ChEBI" id="CHEBI:29105"/>
        <label>1</label>
    </ligand>
</feature>
<feature type="binding site" evidence="1">
    <location>
        <position position="88"/>
    </location>
    <ligand>
        <name>Zn(2+)</name>
        <dbReference type="ChEBI" id="CHEBI:29105"/>
        <label>1</label>
    </ligand>
</feature>
<feature type="binding site" evidence="1">
    <location>
        <position position="461"/>
    </location>
    <ligand>
        <name>Mg(2+)</name>
        <dbReference type="ChEBI" id="CHEBI:18420"/>
    </ligand>
</feature>
<feature type="binding site" evidence="1">
    <location>
        <position position="463"/>
    </location>
    <ligand>
        <name>Mg(2+)</name>
        <dbReference type="ChEBI" id="CHEBI:18420"/>
    </ligand>
</feature>
<feature type="binding site" evidence="1">
    <location>
        <position position="465"/>
    </location>
    <ligand>
        <name>Mg(2+)</name>
        <dbReference type="ChEBI" id="CHEBI:18420"/>
    </ligand>
</feature>
<feature type="binding site" evidence="1">
    <location>
        <position position="810"/>
    </location>
    <ligand>
        <name>Zn(2+)</name>
        <dbReference type="ChEBI" id="CHEBI:29105"/>
        <label>2</label>
    </ligand>
</feature>
<feature type="binding site" evidence="1">
    <location>
        <position position="884"/>
    </location>
    <ligand>
        <name>Zn(2+)</name>
        <dbReference type="ChEBI" id="CHEBI:29105"/>
        <label>2</label>
    </ligand>
</feature>
<feature type="binding site" evidence="1">
    <location>
        <position position="891"/>
    </location>
    <ligand>
        <name>Zn(2+)</name>
        <dbReference type="ChEBI" id="CHEBI:29105"/>
        <label>2</label>
    </ligand>
</feature>
<feature type="binding site" evidence="1">
    <location>
        <position position="894"/>
    </location>
    <ligand>
        <name>Zn(2+)</name>
        <dbReference type="ChEBI" id="CHEBI:29105"/>
        <label>2</label>
    </ligand>
</feature>
<evidence type="ECO:0000255" key="1">
    <source>
        <dbReference type="HAMAP-Rule" id="MF_01322"/>
    </source>
</evidence>
<evidence type="ECO:0000256" key="2">
    <source>
        <dbReference type="SAM" id="MobiDB-lite"/>
    </source>
</evidence>
<accession>Q2GCD8</accession>
<dbReference type="EC" id="2.7.7.6" evidence="1"/>
<dbReference type="EMBL" id="CP000248">
    <property type="protein sequence ID" value="ABD24472.1"/>
    <property type="molecule type" value="Genomic_DNA"/>
</dbReference>
<dbReference type="RefSeq" id="WP_011443686.1">
    <property type="nucleotide sequence ID" value="NC_007794.1"/>
</dbReference>
<dbReference type="SMR" id="Q2GCD8"/>
<dbReference type="STRING" id="279238.Saro_0023"/>
<dbReference type="KEGG" id="nar:Saro_0023"/>
<dbReference type="eggNOG" id="COG0086">
    <property type="taxonomic scope" value="Bacteria"/>
</dbReference>
<dbReference type="HOGENOM" id="CLU_000524_3_1_5"/>
<dbReference type="Proteomes" id="UP000009134">
    <property type="component" value="Chromosome"/>
</dbReference>
<dbReference type="GO" id="GO:0000428">
    <property type="term" value="C:DNA-directed RNA polymerase complex"/>
    <property type="evidence" value="ECO:0007669"/>
    <property type="project" value="UniProtKB-KW"/>
</dbReference>
<dbReference type="GO" id="GO:0003677">
    <property type="term" value="F:DNA binding"/>
    <property type="evidence" value="ECO:0007669"/>
    <property type="project" value="UniProtKB-UniRule"/>
</dbReference>
<dbReference type="GO" id="GO:0003899">
    <property type="term" value="F:DNA-directed RNA polymerase activity"/>
    <property type="evidence" value="ECO:0007669"/>
    <property type="project" value="UniProtKB-UniRule"/>
</dbReference>
<dbReference type="GO" id="GO:0000287">
    <property type="term" value="F:magnesium ion binding"/>
    <property type="evidence" value="ECO:0007669"/>
    <property type="project" value="UniProtKB-UniRule"/>
</dbReference>
<dbReference type="GO" id="GO:0008270">
    <property type="term" value="F:zinc ion binding"/>
    <property type="evidence" value="ECO:0007669"/>
    <property type="project" value="UniProtKB-UniRule"/>
</dbReference>
<dbReference type="GO" id="GO:0006351">
    <property type="term" value="P:DNA-templated transcription"/>
    <property type="evidence" value="ECO:0007669"/>
    <property type="project" value="UniProtKB-UniRule"/>
</dbReference>
<dbReference type="CDD" id="cd02655">
    <property type="entry name" value="RNAP_beta'_C"/>
    <property type="match status" value="1"/>
</dbReference>
<dbReference type="CDD" id="cd01609">
    <property type="entry name" value="RNAP_beta'_N"/>
    <property type="match status" value="1"/>
</dbReference>
<dbReference type="FunFam" id="4.10.860.120:FF:000001">
    <property type="entry name" value="DNA-directed RNA polymerase subunit beta"/>
    <property type="match status" value="1"/>
</dbReference>
<dbReference type="Gene3D" id="1.10.132.30">
    <property type="match status" value="1"/>
</dbReference>
<dbReference type="Gene3D" id="1.10.150.390">
    <property type="match status" value="1"/>
</dbReference>
<dbReference type="Gene3D" id="1.10.1790.20">
    <property type="match status" value="1"/>
</dbReference>
<dbReference type="Gene3D" id="1.10.40.90">
    <property type="match status" value="1"/>
</dbReference>
<dbReference type="Gene3D" id="2.40.40.20">
    <property type="match status" value="1"/>
</dbReference>
<dbReference type="Gene3D" id="2.40.50.100">
    <property type="match status" value="3"/>
</dbReference>
<dbReference type="Gene3D" id="4.10.860.120">
    <property type="entry name" value="RNA polymerase II, clamp domain"/>
    <property type="match status" value="1"/>
</dbReference>
<dbReference type="Gene3D" id="1.10.274.100">
    <property type="entry name" value="RNA polymerase Rpb1, domain 3"/>
    <property type="match status" value="2"/>
</dbReference>
<dbReference type="HAMAP" id="MF_01322">
    <property type="entry name" value="RNApol_bact_RpoC"/>
    <property type="match status" value="1"/>
</dbReference>
<dbReference type="InterPro" id="IPR045867">
    <property type="entry name" value="DNA-dir_RpoC_beta_prime"/>
</dbReference>
<dbReference type="InterPro" id="IPR012754">
    <property type="entry name" value="DNA-dir_RpoC_beta_prime_bact"/>
</dbReference>
<dbReference type="InterPro" id="IPR000722">
    <property type="entry name" value="RNA_pol_asu"/>
</dbReference>
<dbReference type="InterPro" id="IPR006592">
    <property type="entry name" value="RNA_pol_N"/>
</dbReference>
<dbReference type="InterPro" id="IPR007080">
    <property type="entry name" value="RNA_pol_Rpb1_1"/>
</dbReference>
<dbReference type="InterPro" id="IPR007066">
    <property type="entry name" value="RNA_pol_Rpb1_3"/>
</dbReference>
<dbReference type="InterPro" id="IPR042102">
    <property type="entry name" value="RNA_pol_Rpb1_3_sf"/>
</dbReference>
<dbReference type="InterPro" id="IPR007083">
    <property type="entry name" value="RNA_pol_Rpb1_4"/>
</dbReference>
<dbReference type="InterPro" id="IPR007081">
    <property type="entry name" value="RNA_pol_Rpb1_5"/>
</dbReference>
<dbReference type="InterPro" id="IPR044893">
    <property type="entry name" value="RNA_pol_Rpb1_clamp_domain"/>
</dbReference>
<dbReference type="InterPro" id="IPR038120">
    <property type="entry name" value="Rpb1_funnel_sf"/>
</dbReference>
<dbReference type="NCBIfam" id="TIGR02386">
    <property type="entry name" value="rpoC_TIGR"/>
    <property type="match status" value="1"/>
</dbReference>
<dbReference type="PANTHER" id="PTHR19376">
    <property type="entry name" value="DNA-DIRECTED RNA POLYMERASE"/>
    <property type="match status" value="1"/>
</dbReference>
<dbReference type="PANTHER" id="PTHR19376:SF54">
    <property type="entry name" value="DNA-DIRECTED RNA POLYMERASE SUBUNIT BETA"/>
    <property type="match status" value="1"/>
</dbReference>
<dbReference type="Pfam" id="PF04997">
    <property type="entry name" value="RNA_pol_Rpb1_1"/>
    <property type="match status" value="1"/>
</dbReference>
<dbReference type="Pfam" id="PF00623">
    <property type="entry name" value="RNA_pol_Rpb1_2"/>
    <property type="match status" value="1"/>
</dbReference>
<dbReference type="Pfam" id="PF04983">
    <property type="entry name" value="RNA_pol_Rpb1_3"/>
    <property type="match status" value="1"/>
</dbReference>
<dbReference type="Pfam" id="PF05000">
    <property type="entry name" value="RNA_pol_Rpb1_4"/>
    <property type="match status" value="1"/>
</dbReference>
<dbReference type="Pfam" id="PF04998">
    <property type="entry name" value="RNA_pol_Rpb1_5"/>
    <property type="match status" value="1"/>
</dbReference>
<dbReference type="SMART" id="SM00663">
    <property type="entry name" value="RPOLA_N"/>
    <property type="match status" value="1"/>
</dbReference>
<dbReference type="SUPFAM" id="SSF64484">
    <property type="entry name" value="beta and beta-prime subunits of DNA dependent RNA-polymerase"/>
    <property type="match status" value="1"/>
</dbReference>
<protein>
    <recommendedName>
        <fullName evidence="1">DNA-directed RNA polymerase subunit beta'</fullName>
        <shortName evidence="1">RNAP subunit beta'</shortName>
        <ecNumber evidence="1">2.7.7.6</ecNumber>
    </recommendedName>
    <alternativeName>
        <fullName evidence="1">RNA polymerase subunit beta'</fullName>
    </alternativeName>
    <alternativeName>
        <fullName evidence="1">Transcriptase subunit beta'</fullName>
    </alternativeName>
</protein>
<keyword id="KW-0240">DNA-directed RNA polymerase</keyword>
<keyword id="KW-0460">Magnesium</keyword>
<keyword id="KW-0479">Metal-binding</keyword>
<keyword id="KW-0548">Nucleotidyltransferase</keyword>
<keyword id="KW-1185">Reference proteome</keyword>
<keyword id="KW-0804">Transcription</keyword>
<keyword id="KW-0808">Transferase</keyword>
<keyword id="KW-0862">Zinc</keyword>
<comment type="function">
    <text evidence="1">DNA-dependent RNA polymerase catalyzes the transcription of DNA into RNA using the four ribonucleoside triphosphates as substrates.</text>
</comment>
<comment type="catalytic activity">
    <reaction evidence="1">
        <text>RNA(n) + a ribonucleoside 5'-triphosphate = RNA(n+1) + diphosphate</text>
        <dbReference type="Rhea" id="RHEA:21248"/>
        <dbReference type="Rhea" id="RHEA-COMP:14527"/>
        <dbReference type="Rhea" id="RHEA-COMP:17342"/>
        <dbReference type="ChEBI" id="CHEBI:33019"/>
        <dbReference type="ChEBI" id="CHEBI:61557"/>
        <dbReference type="ChEBI" id="CHEBI:140395"/>
        <dbReference type="EC" id="2.7.7.6"/>
    </reaction>
</comment>
<comment type="cofactor">
    <cofactor evidence="1">
        <name>Mg(2+)</name>
        <dbReference type="ChEBI" id="CHEBI:18420"/>
    </cofactor>
    <text evidence="1">Binds 1 Mg(2+) ion per subunit.</text>
</comment>
<comment type="cofactor">
    <cofactor evidence="1">
        <name>Zn(2+)</name>
        <dbReference type="ChEBI" id="CHEBI:29105"/>
    </cofactor>
    <text evidence="1">Binds 2 Zn(2+) ions per subunit.</text>
</comment>
<comment type="subunit">
    <text evidence="1">The RNAP catalytic core consists of 2 alpha, 1 beta, 1 beta' and 1 omega subunit. When a sigma factor is associated with the core the holoenzyme is formed, which can initiate transcription.</text>
</comment>
<comment type="similarity">
    <text evidence="1">Belongs to the RNA polymerase beta' chain family.</text>
</comment>
<reference key="1">
    <citation type="submission" date="2006-01" db="EMBL/GenBank/DDBJ databases">
        <title>Complete sequence of Novosphingobium aromaticivorans DSM 12444.</title>
        <authorList>
            <consortium name="US DOE Joint Genome Institute"/>
            <person name="Copeland A."/>
            <person name="Lucas S."/>
            <person name="Lapidus A."/>
            <person name="Barry K."/>
            <person name="Detter J.C."/>
            <person name="Glavina T."/>
            <person name="Hammon N."/>
            <person name="Israni S."/>
            <person name="Pitluck S."/>
            <person name="Chain P."/>
            <person name="Malfatti S."/>
            <person name="Shin M."/>
            <person name="Vergez L."/>
            <person name="Schmutz J."/>
            <person name="Larimer F."/>
            <person name="Land M."/>
            <person name="Kyrpides N."/>
            <person name="Ivanova N."/>
            <person name="Fredrickson J."/>
            <person name="Balkwill D."/>
            <person name="Romine M.F."/>
            <person name="Richardson P."/>
        </authorList>
    </citation>
    <scope>NUCLEOTIDE SEQUENCE [LARGE SCALE GENOMIC DNA]</scope>
    <source>
        <strain>ATCC 700278 / DSM 12444 / CCUG 56034 / CIP 105152 / NBRC 16084 / F199</strain>
    </source>
</reference>
<sequence>MNDLTKFTNQIAKPETFDQIQIGLASPERIRSWSFGEIKKPETINYRTFKPERDGLFCARIFGPVKDYECLCGKYKRMKYKGVVCEKCGVEVTVTKVRRERMGHIELAAPVAHIWFLKSLPSRIGLLLDMQLKQLERILYFESYVVIEPGLTPLEKYQLLTEDELLDAQDEYGEDAFSAGIGAEAVKHMLMNLDLVQEKEDLLQELATTKSELKPKKIIKRLKVVESFIDSGNRPEWMILDVVPVIPPELRPLVPLDGGRFATSDLNDLYRRVINRNNRLKRLIELRAPDIIVRNEKRMLQEAVDALFDNGRRGRVITGANKRPLKSLSDMLKGKQGRFRQNLLGKRVDYSGRSVIVTGPELKLHQCGLPKKMALELFKPFIYARLDAKGLSMTLKQAKKWVEKERKEVWDILDEVIREHPVMLNRAPTLHRLGIQAFEPVLIEGKAIQLHPLVCSAFNADFDGDQMAVHVPLSLEAQLEARVLMMSTNNILSPANGKPIIVPSQDMVLGIYYLSMDRAGEPGEGMMLADMAEVHQALEAKAVTLHSKIVARVPQTDEDGNQYLKRFETTPGRMLIGECLPKSHKVPFEIVNRLLTKKEIGDVIDQVYRHTGQKDTVLFADAIMALGFRHAFKAGISFGKDDMIIPDSKDALVAETKELVADYEQQYQDGLITQQEKYNKVIDAWSRCGDQVANAMMEELKSSPIDPETGRQKPINAIYMMSHSGARGSPAQMKQLAGMRGLMAKPSGEIIETPIISNFKEGLTVLEYFNSTHGARKGLADTALKTANSGYLTRRLVDVSQDCVVIEEDCGTERALEMRAIVQGGSTIASLGERILGRTLAEDLIEAKSGEVIAQKGELLDEAAIAKIEAAGVQSARIRSPLVCEATQGVCGKCYGRDLARGTPVNIGEAVGVIAAQSIGEPGTQLTMRTFHIGGAAQVNEQSHLEAISDGTVQYRDIPTITDKRGRRLSLARNGEIVVIDTEGRERAIHRVPYGTHLLHENGAIISQGDRLAEWDPFTTPVITEKPGIVRYQDLVDGKTLTEQTDEATGMSSRVVTENRAAGRGKKEDLRPRLTLLDENSGEAARYMMAPGTTLSVEDGQQVEAGDILARASREAAKTRDITGGLPRVAELFEARKPKDNSIIAKIAGRIEFVRDYKAKRKIAIIPEEGEPVEYLVPKSRVIDVQEGDYVKKGDNLISGSPDPHDILEVMGVEALAEYLVAEIQEVYRLQGVKINDKHIEVIVRQMLQKVEITNGGDTTLLPGEQVDLEEMLETNGKLEEGQQPAEGKPVLLGITKASLQTRSFISAASFQETTRVLTQAAVEGKKDSLIGLKENVIVGRLIPAGTGAGMNRMRVAASSRDAALRASYRKLQESLIAPATAAEEHAAELAQGPEAAIGDDPLATVEGETHGTDADAGDYLIEGDEA</sequence>
<organism>
    <name type="scientific">Novosphingobium aromaticivorans (strain ATCC 700278 / DSM 12444 / CCUG 56034 / CIP 105152 / NBRC 16084 / F199)</name>
    <dbReference type="NCBI Taxonomy" id="279238"/>
    <lineage>
        <taxon>Bacteria</taxon>
        <taxon>Pseudomonadati</taxon>
        <taxon>Pseudomonadota</taxon>
        <taxon>Alphaproteobacteria</taxon>
        <taxon>Sphingomonadales</taxon>
        <taxon>Sphingomonadaceae</taxon>
        <taxon>Novosphingobium</taxon>
    </lineage>
</organism>
<name>RPOC_NOVAD</name>